<organism>
    <name type="scientific">Methylococcus capsulatus (strain ATCC 33009 / NCIMB 11132 / Bath)</name>
    <dbReference type="NCBI Taxonomy" id="243233"/>
    <lineage>
        <taxon>Bacteria</taxon>
        <taxon>Pseudomonadati</taxon>
        <taxon>Pseudomonadota</taxon>
        <taxon>Gammaproteobacteria</taxon>
        <taxon>Methylococcales</taxon>
        <taxon>Methylococcaceae</taxon>
        <taxon>Methylococcus</taxon>
    </lineage>
</organism>
<gene>
    <name evidence="1" type="primary">proA</name>
    <name type="ordered locus">MCA1880</name>
</gene>
<feature type="chain" id="PRO_0000189749" description="Gamma-glutamyl phosphate reductase">
    <location>
        <begin position="1"/>
        <end position="430"/>
    </location>
</feature>
<dbReference type="EC" id="1.2.1.41" evidence="1"/>
<dbReference type="EMBL" id="AE017282">
    <property type="protein sequence ID" value="AAU91859.1"/>
    <property type="molecule type" value="Genomic_DNA"/>
</dbReference>
<dbReference type="RefSeq" id="WP_010961132.1">
    <property type="nucleotide sequence ID" value="NC_002977.6"/>
</dbReference>
<dbReference type="SMR" id="Q606Y1"/>
<dbReference type="STRING" id="243233.MCA1880"/>
<dbReference type="GeneID" id="88224125"/>
<dbReference type="KEGG" id="mca:MCA1880"/>
<dbReference type="eggNOG" id="COG0014">
    <property type="taxonomic scope" value="Bacteria"/>
</dbReference>
<dbReference type="HOGENOM" id="CLU_030231_0_0_6"/>
<dbReference type="UniPathway" id="UPA00098">
    <property type="reaction ID" value="UER00360"/>
</dbReference>
<dbReference type="Proteomes" id="UP000006821">
    <property type="component" value="Chromosome"/>
</dbReference>
<dbReference type="GO" id="GO:0005737">
    <property type="term" value="C:cytoplasm"/>
    <property type="evidence" value="ECO:0007669"/>
    <property type="project" value="UniProtKB-SubCell"/>
</dbReference>
<dbReference type="GO" id="GO:0004350">
    <property type="term" value="F:glutamate-5-semialdehyde dehydrogenase activity"/>
    <property type="evidence" value="ECO:0007669"/>
    <property type="project" value="UniProtKB-UniRule"/>
</dbReference>
<dbReference type="GO" id="GO:0050661">
    <property type="term" value="F:NADP binding"/>
    <property type="evidence" value="ECO:0007669"/>
    <property type="project" value="InterPro"/>
</dbReference>
<dbReference type="GO" id="GO:0055129">
    <property type="term" value="P:L-proline biosynthetic process"/>
    <property type="evidence" value="ECO:0007669"/>
    <property type="project" value="UniProtKB-UniRule"/>
</dbReference>
<dbReference type="CDD" id="cd07079">
    <property type="entry name" value="ALDH_F18-19_ProA-GPR"/>
    <property type="match status" value="1"/>
</dbReference>
<dbReference type="FunFam" id="3.40.309.10:FF:000006">
    <property type="entry name" value="Gamma-glutamyl phosphate reductase"/>
    <property type="match status" value="1"/>
</dbReference>
<dbReference type="Gene3D" id="3.40.605.10">
    <property type="entry name" value="Aldehyde Dehydrogenase, Chain A, domain 1"/>
    <property type="match status" value="1"/>
</dbReference>
<dbReference type="Gene3D" id="3.40.309.10">
    <property type="entry name" value="Aldehyde Dehydrogenase, Chain A, domain 2"/>
    <property type="match status" value="1"/>
</dbReference>
<dbReference type="HAMAP" id="MF_00412">
    <property type="entry name" value="ProA"/>
    <property type="match status" value="1"/>
</dbReference>
<dbReference type="InterPro" id="IPR016161">
    <property type="entry name" value="Ald_DH/histidinol_DH"/>
</dbReference>
<dbReference type="InterPro" id="IPR016163">
    <property type="entry name" value="Ald_DH_C"/>
</dbReference>
<dbReference type="InterPro" id="IPR016162">
    <property type="entry name" value="Ald_DH_N"/>
</dbReference>
<dbReference type="InterPro" id="IPR015590">
    <property type="entry name" value="Aldehyde_DH_dom"/>
</dbReference>
<dbReference type="InterPro" id="IPR020593">
    <property type="entry name" value="G-glutamylP_reductase_CS"/>
</dbReference>
<dbReference type="InterPro" id="IPR012134">
    <property type="entry name" value="Glu-5-SA_DH"/>
</dbReference>
<dbReference type="InterPro" id="IPR000965">
    <property type="entry name" value="GPR_dom"/>
</dbReference>
<dbReference type="NCBIfam" id="NF001221">
    <property type="entry name" value="PRK00197.1"/>
    <property type="match status" value="1"/>
</dbReference>
<dbReference type="NCBIfam" id="TIGR00407">
    <property type="entry name" value="proA"/>
    <property type="match status" value="1"/>
</dbReference>
<dbReference type="PANTHER" id="PTHR11063:SF8">
    <property type="entry name" value="DELTA-1-PYRROLINE-5-CARBOXYLATE SYNTHASE"/>
    <property type="match status" value="1"/>
</dbReference>
<dbReference type="PANTHER" id="PTHR11063">
    <property type="entry name" value="GLUTAMATE SEMIALDEHYDE DEHYDROGENASE"/>
    <property type="match status" value="1"/>
</dbReference>
<dbReference type="Pfam" id="PF00171">
    <property type="entry name" value="Aldedh"/>
    <property type="match status" value="2"/>
</dbReference>
<dbReference type="PIRSF" id="PIRSF000151">
    <property type="entry name" value="GPR"/>
    <property type="match status" value="1"/>
</dbReference>
<dbReference type="SUPFAM" id="SSF53720">
    <property type="entry name" value="ALDH-like"/>
    <property type="match status" value="1"/>
</dbReference>
<dbReference type="PROSITE" id="PS01223">
    <property type="entry name" value="PROA"/>
    <property type="match status" value="1"/>
</dbReference>
<comment type="function">
    <text evidence="1">Catalyzes the NADPH-dependent reduction of L-glutamate 5-phosphate into L-glutamate 5-semialdehyde and phosphate. The product spontaneously undergoes cyclization to form 1-pyrroline-5-carboxylate.</text>
</comment>
<comment type="catalytic activity">
    <reaction evidence="1">
        <text>L-glutamate 5-semialdehyde + phosphate + NADP(+) = L-glutamyl 5-phosphate + NADPH + H(+)</text>
        <dbReference type="Rhea" id="RHEA:19541"/>
        <dbReference type="ChEBI" id="CHEBI:15378"/>
        <dbReference type="ChEBI" id="CHEBI:43474"/>
        <dbReference type="ChEBI" id="CHEBI:57783"/>
        <dbReference type="ChEBI" id="CHEBI:58066"/>
        <dbReference type="ChEBI" id="CHEBI:58274"/>
        <dbReference type="ChEBI" id="CHEBI:58349"/>
        <dbReference type="EC" id="1.2.1.41"/>
    </reaction>
</comment>
<comment type="pathway">
    <text evidence="1">Amino-acid biosynthesis; L-proline biosynthesis; L-glutamate 5-semialdehyde from L-glutamate: step 2/2.</text>
</comment>
<comment type="subcellular location">
    <subcellularLocation>
        <location evidence="1">Cytoplasm</location>
    </subcellularLocation>
</comment>
<comment type="similarity">
    <text evidence="1">Belongs to the gamma-glutamyl phosphate reductase family.</text>
</comment>
<proteinExistence type="inferred from homology"/>
<protein>
    <recommendedName>
        <fullName evidence="1">Gamma-glutamyl phosphate reductase</fullName>
        <shortName evidence="1">GPR</shortName>
        <ecNumber evidence="1">1.2.1.41</ecNumber>
    </recommendedName>
    <alternativeName>
        <fullName evidence="1">Glutamate-5-semialdehyde dehydrogenase</fullName>
    </alternativeName>
    <alternativeName>
        <fullName evidence="1">Glutamyl-gamma-semialdehyde dehydrogenase</fullName>
        <shortName evidence="1">GSA dehydrogenase</shortName>
    </alternativeName>
</protein>
<reference key="1">
    <citation type="journal article" date="2004" name="PLoS Biol.">
        <title>Genomic insights into methanotrophy: the complete genome sequence of Methylococcus capsulatus (Bath).</title>
        <authorList>
            <person name="Ward N.L."/>
            <person name="Larsen O."/>
            <person name="Sakwa J."/>
            <person name="Bruseth L."/>
            <person name="Khouri H.M."/>
            <person name="Durkin A.S."/>
            <person name="Dimitrov G."/>
            <person name="Jiang L."/>
            <person name="Scanlan D."/>
            <person name="Kang K.H."/>
            <person name="Lewis M.R."/>
            <person name="Nelson K.E."/>
            <person name="Methe B.A."/>
            <person name="Wu M."/>
            <person name="Heidelberg J.F."/>
            <person name="Paulsen I.T."/>
            <person name="Fouts D.E."/>
            <person name="Ravel J."/>
            <person name="Tettelin H."/>
            <person name="Ren Q."/>
            <person name="Read T.D."/>
            <person name="DeBoy R.T."/>
            <person name="Seshadri R."/>
            <person name="Salzberg S.L."/>
            <person name="Jensen H.B."/>
            <person name="Birkeland N.K."/>
            <person name="Nelson W.C."/>
            <person name="Dodson R.J."/>
            <person name="Grindhaug S.H."/>
            <person name="Holt I.E."/>
            <person name="Eidhammer I."/>
            <person name="Jonasen I."/>
            <person name="Vanaken S."/>
            <person name="Utterback T.R."/>
            <person name="Feldblyum T.V."/>
            <person name="Fraser C.M."/>
            <person name="Lillehaug J.R."/>
            <person name="Eisen J.A."/>
        </authorList>
    </citation>
    <scope>NUCLEOTIDE SEQUENCE [LARGE SCALE GENOMIC DNA]</scope>
    <source>
        <strain>ATCC 33009 / NCIMB 11132 / Bath</strain>
    </source>
</reference>
<evidence type="ECO:0000255" key="1">
    <source>
        <dbReference type="HAMAP-Rule" id="MF_00412"/>
    </source>
</evidence>
<accession>Q606Y1</accession>
<keyword id="KW-0028">Amino-acid biosynthesis</keyword>
<keyword id="KW-0963">Cytoplasm</keyword>
<keyword id="KW-0521">NADP</keyword>
<keyword id="KW-0560">Oxidoreductase</keyword>
<keyword id="KW-0641">Proline biosynthesis</keyword>
<keyword id="KW-1185">Reference proteome</keyword>
<sequence>MTAVSALRPAGPEAVAAYVDGLARRAREVGRILSRAETAAKNRALLAIAAALEESADALIEENRKDLEAGAAKGLDRAQLERLGVDAKRVQTMAVGLREIAALPDPVGEISGLTYRPSGIQVGRMRVPLGVIGIIYESRPNVTADAAGLCLKSGNACILRGGSEAIHSNRAIAACIRRGLEAGGLPADAVQLIETTDRAAVGALLAADEYVDIIVPRGGRSLIERVVAESRIPVIKHLDGICHVYIDDGADLAKARRIAINAKTQRYGVCNAMETLLVAAGIAPAVLPDLAALYRDKGVELRGCPETCRLVPDCVPATEADWDTEYLAPILAVRVVAGLDEAIEHIHRHGSGHTDAIVTEDYGRARRFLREVDSASVMVNASTRFADGFEYGLGAEIGISTDKLHARGPVGLEGLTTQKFIVLGDGHVRI</sequence>
<name>PROA_METCA</name>